<feature type="chain" id="PRO_0000319517" description="ATP phosphoribosyltransferase">
    <location>
        <begin position="1"/>
        <end position="208"/>
    </location>
</feature>
<name>HIS1_CLOD6</name>
<keyword id="KW-0028">Amino-acid biosynthesis</keyword>
<keyword id="KW-0067">ATP-binding</keyword>
<keyword id="KW-0963">Cytoplasm</keyword>
<keyword id="KW-0328">Glycosyltransferase</keyword>
<keyword id="KW-0368">Histidine biosynthesis</keyword>
<keyword id="KW-0547">Nucleotide-binding</keyword>
<keyword id="KW-1185">Reference proteome</keyword>
<keyword id="KW-0808">Transferase</keyword>
<evidence type="ECO:0000255" key="1">
    <source>
        <dbReference type="HAMAP-Rule" id="MF_01018"/>
    </source>
</evidence>
<sequence length="208" mass="23491">MDYLTIALAKGRIEGESFKKFKKMGLGDSIDTDTRKLIFKDEENKIIYIHVKPSDVVTYVEKGVADLGIAGKDTILENETDVYEIYDLGFGKCKFAVAGLKGDSIYREDEYLKVATKYPNIAKKYFKEKGQKIEIIKLNGSVELAPIVGLSDVIVDIVETGNTLKANGLEILEDICNISARIISNRASYRFKYEQIQNIIRLFEELDN</sequence>
<proteinExistence type="inferred from homology"/>
<protein>
    <recommendedName>
        <fullName evidence="1">ATP phosphoribosyltransferase</fullName>
        <shortName evidence="1">ATP-PRT</shortName>
        <shortName evidence="1">ATP-PRTase</shortName>
        <ecNumber evidence="1">2.4.2.17</ecNumber>
    </recommendedName>
</protein>
<organism>
    <name type="scientific">Clostridioides difficile (strain 630)</name>
    <name type="common">Peptoclostridium difficile</name>
    <dbReference type="NCBI Taxonomy" id="272563"/>
    <lineage>
        <taxon>Bacteria</taxon>
        <taxon>Bacillati</taxon>
        <taxon>Bacillota</taxon>
        <taxon>Clostridia</taxon>
        <taxon>Peptostreptococcales</taxon>
        <taxon>Peptostreptococcaceae</taxon>
        <taxon>Clostridioides</taxon>
    </lineage>
</organism>
<accession>Q18C67</accession>
<comment type="function">
    <text evidence="1">Catalyzes the condensation of ATP and 5-phosphoribose 1-diphosphate to form N'-(5'-phosphoribosyl)-ATP (PR-ATP). Has a crucial role in the pathway because the rate of histidine biosynthesis seems to be controlled primarily by regulation of HisG enzymatic activity.</text>
</comment>
<comment type="catalytic activity">
    <reaction evidence="1">
        <text>1-(5-phospho-beta-D-ribosyl)-ATP + diphosphate = 5-phospho-alpha-D-ribose 1-diphosphate + ATP</text>
        <dbReference type="Rhea" id="RHEA:18473"/>
        <dbReference type="ChEBI" id="CHEBI:30616"/>
        <dbReference type="ChEBI" id="CHEBI:33019"/>
        <dbReference type="ChEBI" id="CHEBI:58017"/>
        <dbReference type="ChEBI" id="CHEBI:73183"/>
        <dbReference type="EC" id="2.4.2.17"/>
    </reaction>
</comment>
<comment type="pathway">
    <text evidence="1">Amino-acid biosynthesis; L-histidine biosynthesis; L-histidine from 5-phospho-alpha-D-ribose 1-diphosphate: step 1/9.</text>
</comment>
<comment type="subunit">
    <text evidence="1">Heteromultimer composed of HisG and HisZ subunits.</text>
</comment>
<comment type="subcellular location">
    <subcellularLocation>
        <location evidence="1">Cytoplasm</location>
    </subcellularLocation>
</comment>
<comment type="domain">
    <text>Lacks the C-terminal regulatory region which is replaced by HisZ.</text>
</comment>
<comment type="similarity">
    <text evidence="1">Belongs to the ATP phosphoribosyltransferase family. Short subfamily.</text>
</comment>
<dbReference type="EC" id="2.4.2.17" evidence="1"/>
<dbReference type="EMBL" id="AM180355">
    <property type="protein sequence ID" value="CAJ68413.1"/>
    <property type="molecule type" value="Genomic_DNA"/>
</dbReference>
<dbReference type="RefSeq" id="WP_003436683.1">
    <property type="nucleotide sequence ID" value="NZ_JAUPES010000019.1"/>
</dbReference>
<dbReference type="RefSeq" id="YP_001088049.1">
    <property type="nucleotide sequence ID" value="NC_009089.1"/>
</dbReference>
<dbReference type="SMR" id="Q18C67"/>
<dbReference type="STRING" id="272563.CD630_15480"/>
<dbReference type="EnsemblBacteria" id="CAJ68413">
    <property type="protein sequence ID" value="CAJ68413"/>
    <property type="gene ID" value="CD630_15480"/>
</dbReference>
<dbReference type="GeneID" id="66353958"/>
<dbReference type="KEGG" id="cdf:CD630_15480"/>
<dbReference type="KEGG" id="pdc:CDIF630_01717"/>
<dbReference type="PATRIC" id="fig|272563.120.peg.1622"/>
<dbReference type="eggNOG" id="COG0040">
    <property type="taxonomic scope" value="Bacteria"/>
</dbReference>
<dbReference type="OrthoDB" id="9801867at2"/>
<dbReference type="PhylomeDB" id="Q18C67"/>
<dbReference type="BioCyc" id="PDIF272563:G12WB-1687-MONOMER"/>
<dbReference type="UniPathway" id="UPA00031">
    <property type="reaction ID" value="UER00006"/>
</dbReference>
<dbReference type="Proteomes" id="UP000001978">
    <property type="component" value="Chromosome"/>
</dbReference>
<dbReference type="GO" id="GO:0005737">
    <property type="term" value="C:cytoplasm"/>
    <property type="evidence" value="ECO:0007669"/>
    <property type="project" value="UniProtKB-SubCell"/>
</dbReference>
<dbReference type="GO" id="GO:0005524">
    <property type="term" value="F:ATP binding"/>
    <property type="evidence" value="ECO:0007669"/>
    <property type="project" value="UniProtKB-KW"/>
</dbReference>
<dbReference type="GO" id="GO:0003879">
    <property type="term" value="F:ATP phosphoribosyltransferase activity"/>
    <property type="evidence" value="ECO:0007669"/>
    <property type="project" value="UniProtKB-UniRule"/>
</dbReference>
<dbReference type="GO" id="GO:0000105">
    <property type="term" value="P:L-histidine biosynthetic process"/>
    <property type="evidence" value="ECO:0007669"/>
    <property type="project" value="UniProtKB-UniRule"/>
</dbReference>
<dbReference type="CDD" id="cd13595">
    <property type="entry name" value="PBP2_HisGs"/>
    <property type="match status" value="1"/>
</dbReference>
<dbReference type="FunFam" id="3.40.190.10:FF:000008">
    <property type="entry name" value="ATP phosphoribosyltransferase"/>
    <property type="match status" value="1"/>
</dbReference>
<dbReference type="Gene3D" id="3.40.190.10">
    <property type="entry name" value="Periplasmic binding protein-like II"/>
    <property type="match status" value="2"/>
</dbReference>
<dbReference type="HAMAP" id="MF_01018">
    <property type="entry name" value="HisG_Short"/>
    <property type="match status" value="1"/>
</dbReference>
<dbReference type="InterPro" id="IPR013820">
    <property type="entry name" value="ATP_PRibTrfase_cat"/>
</dbReference>
<dbReference type="InterPro" id="IPR018198">
    <property type="entry name" value="ATP_PRibTrfase_CS"/>
</dbReference>
<dbReference type="InterPro" id="IPR001348">
    <property type="entry name" value="ATP_PRibTrfase_HisG"/>
</dbReference>
<dbReference type="InterPro" id="IPR024893">
    <property type="entry name" value="ATP_PRibTrfase_HisG_short"/>
</dbReference>
<dbReference type="NCBIfam" id="TIGR00070">
    <property type="entry name" value="hisG"/>
    <property type="match status" value="1"/>
</dbReference>
<dbReference type="PANTHER" id="PTHR21403:SF8">
    <property type="entry name" value="ATP PHOSPHORIBOSYLTRANSFERASE"/>
    <property type="match status" value="1"/>
</dbReference>
<dbReference type="PANTHER" id="PTHR21403">
    <property type="entry name" value="ATP PHOSPHORIBOSYLTRANSFERASE ATP-PRTASE"/>
    <property type="match status" value="1"/>
</dbReference>
<dbReference type="Pfam" id="PF01634">
    <property type="entry name" value="HisG"/>
    <property type="match status" value="1"/>
</dbReference>
<dbReference type="SUPFAM" id="SSF53850">
    <property type="entry name" value="Periplasmic binding protein-like II"/>
    <property type="match status" value="1"/>
</dbReference>
<dbReference type="PROSITE" id="PS01316">
    <property type="entry name" value="ATP_P_PHORIBOSYLTR"/>
    <property type="match status" value="1"/>
</dbReference>
<reference key="1">
    <citation type="journal article" date="2006" name="Nat. Genet.">
        <title>The multidrug-resistant human pathogen Clostridium difficile has a highly mobile, mosaic genome.</title>
        <authorList>
            <person name="Sebaihia M."/>
            <person name="Wren B.W."/>
            <person name="Mullany P."/>
            <person name="Fairweather N.F."/>
            <person name="Minton N."/>
            <person name="Stabler R."/>
            <person name="Thomson N.R."/>
            <person name="Roberts A.P."/>
            <person name="Cerdeno-Tarraga A.M."/>
            <person name="Wang H."/>
            <person name="Holden M.T.G."/>
            <person name="Wright A."/>
            <person name="Churcher C."/>
            <person name="Quail M.A."/>
            <person name="Baker S."/>
            <person name="Bason N."/>
            <person name="Brooks K."/>
            <person name="Chillingworth T."/>
            <person name="Cronin A."/>
            <person name="Davis P."/>
            <person name="Dowd L."/>
            <person name="Fraser A."/>
            <person name="Feltwell T."/>
            <person name="Hance Z."/>
            <person name="Holroyd S."/>
            <person name="Jagels K."/>
            <person name="Moule S."/>
            <person name="Mungall K."/>
            <person name="Price C."/>
            <person name="Rabbinowitsch E."/>
            <person name="Sharp S."/>
            <person name="Simmonds M."/>
            <person name="Stevens K."/>
            <person name="Unwin L."/>
            <person name="Whithead S."/>
            <person name="Dupuy B."/>
            <person name="Dougan G."/>
            <person name="Barrell B."/>
            <person name="Parkhill J."/>
        </authorList>
    </citation>
    <scope>NUCLEOTIDE SEQUENCE [LARGE SCALE GENOMIC DNA]</scope>
    <source>
        <strain>630</strain>
    </source>
</reference>
<gene>
    <name evidence="1" type="primary">hisG</name>
    <name type="ordered locus">CD630_15480</name>
</gene>